<comment type="function">
    <text evidence="1">Cell wall formation. Catalyzes the transfer of a GlcNAc subunit on undecaprenyl-pyrophosphoryl-MurNAc-pentapeptide (lipid intermediate I) to form undecaprenyl-pyrophosphoryl-MurNAc-(pentapeptide)GlcNAc (lipid intermediate II).</text>
</comment>
<comment type="catalytic activity">
    <reaction evidence="1">
        <text>di-trans,octa-cis-undecaprenyl diphospho-N-acetyl-alpha-D-muramoyl-L-alanyl-D-glutamyl-meso-2,6-diaminopimeloyl-D-alanyl-D-alanine + UDP-N-acetyl-alpha-D-glucosamine = di-trans,octa-cis-undecaprenyl diphospho-[N-acetyl-alpha-D-glucosaminyl-(1-&gt;4)]-N-acetyl-alpha-D-muramoyl-L-alanyl-D-glutamyl-meso-2,6-diaminopimeloyl-D-alanyl-D-alanine + UDP + H(+)</text>
        <dbReference type="Rhea" id="RHEA:31227"/>
        <dbReference type="ChEBI" id="CHEBI:15378"/>
        <dbReference type="ChEBI" id="CHEBI:57705"/>
        <dbReference type="ChEBI" id="CHEBI:58223"/>
        <dbReference type="ChEBI" id="CHEBI:61387"/>
        <dbReference type="ChEBI" id="CHEBI:61388"/>
        <dbReference type="EC" id="2.4.1.227"/>
    </reaction>
</comment>
<comment type="pathway">
    <text evidence="1">Cell wall biogenesis; peptidoglycan biosynthesis.</text>
</comment>
<comment type="subcellular location">
    <subcellularLocation>
        <location evidence="1">Cell membrane</location>
        <topology evidence="1">Peripheral membrane protein</topology>
        <orientation evidence="1">Cytoplasmic side</orientation>
    </subcellularLocation>
</comment>
<comment type="similarity">
    <text evidence="1">Belongs to the glycosyltransferase 28 family. MurG subfamily.</text>
</comment>
<protein>
    <recommendedName>
        <fullName evidence="1">UDP-N-acetylglucosamine--N-acetylmuramyl-(pentapeptide) pyrophosphoryl-undecaprenol N-acetylglucosamine transferase</fullName>
        <ecNumber evidence="1">2.4.1.227</ecNumber>
    </recommendedName>
    <alternativeName>
        <fullName evidence="1">Undecaprenyl-PP-MurNAc-pentapeptide-UDPGlcNAc GlcNAc transferase</fullName>
    </alternativeName>
</protein>
<reference key="1">
    <citation type="submission" date="2006-12" db="EMBL/GenBank/DDBJ databases">
        <title>Complete sequence of chromosome of Mycobacterium sp. KMS.</title>
        <authorList>
            <consortium name="US DOE Joint Genome Institute"/>
            <person name="Copeland A."/>
            <person name="Lucas S."/>
            <person name="Lapidus A."/>
            <person name="Barry K."/>
            <person name="Detter J.C."/>
            <person name="Glavina del Rio T."/>
            <person name="Hammon N."/>
            <person name="Israni S."/>
            <person name="Dalin E."/>
            <person name="Tice H."/>
            <person name="Pitluck S."/>
            <person name="Kiss H."/>
            <person name="Brettin T."/>
            <person name="Bruce D."/>
            <person name="Han C."/>
            <person name="Tapia R."/>
            <person name="Gilna P."/>
            <person name="Schmutz J."/>
            <person name="Larimer F."/>
            <person name="Land M."/>
            <person name="Hauser L."/>
            <person name="Kyrpides N."/>
            <person name="Mikhailova N."/>
            <person name="Miller C.D."/>
            <person name="Richardson P."/>
        </authorList>
    </citation>
    <scope>NUCLEOTIDE SEQUENCE [LARGE SCALE GENOMIC DNA]</scope>
    <source>
        <strain>KMS</strain>
    </source>
</reference>
<accession>A1UI54</accession>
<gene>
    <name evidence="1" type="primary">murG</name>
    <name type="ordered locus">Mkms_3318</name>
</gene>
<keyword id="KW-0131">Cell cycle</keyword>
<keyword id="KW-0132">Cell division</keyword>
<keyword id="KW-1003">Cell membrane</keyword>
<keyword id="KW-0133">Cell shape</keyword>
<keyword id="KW-0961">Cell wall biogenesis/degradation</keyword>
<keyword id="KW-0328">Glycosyltransferase</keyword>
<keyword id="KW-0472">Membrane</keyword>
<keyword id="KW-0573">Peptidoglycan synthesis</keyword>
<keyword id="KW-0808">Transferase</keyword>
<proteinExistence type="inferred from homology"/>
<evidence type="ECO:0000255" key="1">
    <source>
        <dbReference type="HAMAP-Rule" id="MF_00033"/>
    </source>
</evidence>
<organism>
    <name type="scientific">Mycobacterium sp. (strain KMS)</name>
    <dbReference type="NCBI Taxonomy" id="189918"/>
    <lineage>
        <taxon>Bacteria</taxon>
        <taxon>Bacillati</taxon>
        <taxon>Actinomycetota</taxon>
        <taxon>Actinomycetes</taxon>
        <taxon>Mycobacteriales</taxon>
        <taxon>Mycobacteriaceae</taxon>
        <taxon>Mycobacterium</taxon>
    </lineage>
</organism>
<name>MURG_MYCSK</name>
<sequence length="373" mass="38517">MNGTISVLLAGGGTAGHVEPAMAVADALAALEPGVRITALGTERGLETRLVPERGYALELITPVPLPRKLSGDLARLPMRVRRAVRETREILDTVHADVVIGFGGYVALPAYLAARRNRVPIVVHEANASAGLANKVGARFARRVLSAVADPGLGRVEVVGTPVRSSITELDRAALRAEARAHFGFADDARVLLVFGGSQGARSLNNVVSGAAKALAAAGISVLHAYGAKNTLELPDPAPGDPPYVAVPYLSRMDLAYAAADLAICRSGAMTVAEVTAVGLPAVYVPLPIGNGEQRLNARPVVETGGGLVVDDADLSPQFVADTVVPLLTDTGRLQTMTAGAALSGHRDAARHVAHVALDVAREAAGGRKGVR</sequence>
<dbReference type="EC" id="2.4.1.227" evidence="1"/>
<dbReference type="EMBL" id="CP000518">
    <property type="protein sequence ID" value="ABL92512.1"/>
    <property type="molecule type" value="Genomic_DNA"/>
</dbReference>
<dbReference type="SMR" id="A1UI54"/>
<dbReference type="STRING" id="189918.Mkms_3318"/>
<dbReference type="CAZy" id="GT28">
    <property type="family name" value="Glycosyltransferase Family 28"/>
</dbReference>
<dbReference type="KEGG" id="mkm:Mkms_3318"/>
<dbReference type="HOGENOM" id="CLU_037404_1_0_11"/>
<dbReference type="OrthoDB" id="9808936at2"/>
<dbReference type="UniPathway" id="UPA00219"/>
<dbReference type="GO" id="GO:0005886">
    <property type="term" value="C:plasma membrane"/>
    <property type="evidence" value="ECO:0007669"/>
    <property type="project" value="UniProtKB-SubCell"/>
</dbReference>
<dbReference type="GO" id="GO:0051991">
    <property type="term" value="F:UDP-N-acetyl-D-glucosamine:N-acetylmuramoyl-L-alanyl-D-glutamyl-meso-2,6-diaminopimelyl-D-alanyl-D-alanine-diphosphoundecaprenol 4-beta-N-acetylglucosaminlytransferase activity"/>
    <property type="evidence" value="ECO:0007669"/>
    <property type="project" value="RHEA"/>
</dbReference>
<dbReference type="GO" id="GO:0050511">
    <property type="term" value="F:undecaprenyldiphospho-muramoylpentapeptide beta-N-acetylglucosaminyltransferase activity"/>
    <property type="evidence" value="ECO:0007669"/>
    <property type="project" value="UniProtKB-UniRule"/>
</dbReference>
<dbReference type="GO" id="GO:0005975">
    <property type="term" value="P:carbohydrate metabolic process"/>
    <property type="evidence" value="ECO:0007669"/>
    <property type="project" value="InterPro"/>
</dbReference>
<dbReference type="GO" id="GO:0051301">
    <property type="term" value="P:cell division"/>
    <property type="evidence" value="ECO:0007669"/>
    <property type="project" value="UniProtKB-KW"/>
</dbReference>
<dbReference type="GO" id="GO:0071555">
    <property type="term" value="P:cell wall organization"/>
    <property type="evidence" value="ECO:0007669"/>
    <property type="project" value="UniProtKB-KW"/>
</dbReference>
<dbReference type="GO" id="GO:0030259">
    <property type="term" value="P:lipid glycosylation"/>
    <property type="evidence" value="ECO:0007669"/>
    <property type="project" value="UniProtKB-UniRule"/>
</dbReference>
<dbReference type="GO" id="GO:0009252">
    <property type="term" value="P:peptidoglycan biosynthetic process"/>
    <property type="evidence" value="ECO:0007669"/>
    <property type="project" value="UniProtKB-UniRule"/>
</dbReference>
<dbReference type="GO" id="GO:0008360">
    <property type="term" value="P:regulation of cell shape"/>
    <property type="evidence" value="ECO:0007669"/>
    <property type="project" value="UniProtKB-KW"/>
</dbReference>
<dbReference type="CDD" id="cd03785">
    <property type="entry name" value="GT28_MurG"/>
    <property type="match status" value="1"/>
</dbReference>
<dbReference type="Gene3D" id="3.40.50.2000">
    <property type="entry name" value="Glycogen Phosphorylase B"/>
    <property type="match status" value="2"/>
</dbReference>
<dbReference type="HAMAP" id="MF_00033">
    <property type="entry name" value="MurG"/>
    <property type="match status" value="1"/>
</dbReference>
<dbReference type="InterPro" id="IPR006009">
    <property type="entry name" value="GlcNAc_MurG"/>
</dbReference>
<dbReference type="InterPro" id="IPR007235">
    <property type="entry name" value="Glyco_trans_28_C"/>
</dbReference>
<dbReference type="InterPro" id="IPR004276">
    <property type="entry name" value="GlycoTrans_28_N"/>
</dbReference>
<dbReference type="NCBIfam" id="TIGR01133">
    <property type="entry name" value="murG"/>
    <property type="match status" value="1"/>
</dbReference>
<dbReference type="PANTHER" id="PTHR21015:SF22">
    <property type="entry name" value="GLYCOSYLTRANSFERASE"/>
    <property type="match status" value="1"/>
</dbReference>
<dbReference type="PANTHER" id="PTHR21015">
    <property type="entry name" value="UDP-N-ACETYLGLUCOSAMINE--N-ACETYLMURAMYL-(PENTAPEPTIDE) PYROPHOSPHORYL-UNDECAPRENOL N-ACETYLGLUCOSAMINE TRANSFERASE 1"/>
    <property type="match status" value="1"/>
</dbReference>
<dbReference type="Pfam" id="PF04101">
    <property type="entry name" value="Glyco_tran_28_C"/>
    <property type="match status" value="1"/>
</dbReference>
<dbReference type="Pfam" id="PF03033">
    <property type="entry name" value="Glyco_transf_28"/>
    <property type="match status" value="1"/>
</dbReference>
<dbReference type="SUPFAM" id="SSF53756">
    <property type="entry name" value="UDP-Glycosyltransferase/glycogen phosphorylase"/>
    <property type="match status" value="1"/>
</dbReference>
<feature type="chain" id="PRO_0000315121" description="UDP-N-acetylglucosamine--N-acetylmuramyl-(pentapeptide) pyrophosphoryl-undecaprenol N-acetylglucosamine transferase">
    <location>
        <begin position="1"/>
        <end position="373"/>
    </location>
</feature>
<feature type="binding site" evidence="1">
    <location>
        <begin position="14"/>
        <end position="16"/>
    </location>
    <ligand>
        <name>UDP-N-acetyl-alpha-D-glucosamine</name>
        <dbReference type="ChEBI" id="CHEBI:57705"/>
    </ligand>
</feature>
<feature type="binding site" evidence="1">
    <location>
        <position position="128"/>
    </location>
    <ligand>
        <name>UDP-N-acetyl-alpha-D-glucosamine</name>
        <dbReference type="ChEBI" id="CHEBI:57705"/>
    </ligand>
</feature>
<feature type="binding site" evidence="1">
    <location>
        <position position="165"/>
    </location>
    <ligand>
        <name>UDP-N-acetyl-alpha-D-glucosamine</name>
        <dbReference type="ChEBI" id="CHEBI:57705"/>
    </ligand>
</feature>
<feature type="binding site" evidence="1">
    <location>
        <position position="199"/>
    </location>
    <ligand>
        <name>UDP-N-acetyl-alpha-D-glucosamine</name>
        <dbReference type="ChEBI" id="CHEBI:57705"/>
    </ligand>
</feature>
<feature type="binding site" evidence="1">
    <location>
        <position position="295"/>
    </location>
    <ligand>
        <name>UDP-N-acetyl-alpha-D-glucosamine</name>
        <dbReference type="ChEBI" id="CHEBI:57705"/>
    </ligand>
</feature>